<organism>
    <name type="scientific">Rhizobium etli (strain ATCC 51251 / DSM 11541 / JCM 21823 / NBRC 15573 / CFN 42)</name>
    <dbReference type="NCBI Taxonomy" id="347834"/>
    <lineage>
        <taxon>Bacteria</taxon>
        <taxon>Pseudomonadati</taxon>
        <taxon>Pseudomonadota</taxon>
        <taxon>Alphaproteobacteria</taxon>
        <taxon>Hyphomicrobiales</taxon>
        <taxon>Rhizobiaceae</taxon>
        <taxon>Rhizobium/Agrobacterium group</taxon>
        <taxon>Rhizobium</taxon>
    </lineage>
</organism>
<comment type="function">
    <text evidence="1">Produces ATP from ADP in the presence of a proton gradient across the membrane. The alpha chain is a regulatory subunit.</text>
</comment>
<comment type="catalytic activity">
    <reaction evidence="1">
        <text>ATP + H2O + 4 H(+)(in) = ADP + phosphate + 5 H(+)(out)</text>
        <dbReference type="Rhea" id="RHEA:57720"/>
        <dbReference type="ChEBI" id="CHEBI:15377"/>
        <dbReference type="ChEBI" id="CHEBI:15378"/>
        <dbReference type="ChEBI" id="CHEBI:30616"/>
        <dbReference type="ChEBI" id="CHEBI:43474"/>
        <dbReference type="ChEBI" id="CHEBI:456216"/>
        <dbReference type="EC" id="7.1.2.2"/>
    </reaction>
</comment>
<comment type="subunit">
    <text evidence="1">F-type ATPases have 2 components, CF(1) - the catalytic core - and CF(0) - the membrane proton channel. CF(1) has five subunits: alpha(3), beta(3), gamma(1), delta(1), epsilon(1). CF(0) has three main subunits: a(1), b(2) and c(9-12). The alpha and beta chains form an alternating ring which encloses part of the gamma chain. CF(1) is attached to CF(0) by a central stalk formed by the gamma and epsilon chains, while a peripheral stalk is formed by the delta and b chains.</text>
</comment>
<comment type="subcellular location">
    <subcellularLocation>
        <location evidence="1">Cell inner membrane</location>
        <topology evidence="1">Peripheral membrane protein</topology>
    </subcellularLocation>
</comment>
<comment type="similarity">
    <text evidence="1">Belongs to the ATPase alpha/beta chains family.</text>
</comment>
<keyword id="KW-0066">ATP synthesis</keyword>
<keyword id="KW-0067">ATP-binding</keyword>
<keyword id="KW-0997">Cell inner membrane</keyword>
<keyword id="KW-1003">Cell membrane</keyword>
<keyword id="KW-0139">CF(1)</keyword>
<keyword id="KW-0375">Hydrogen ion transport</keyword>
<keyword id="KW-0406">Ion transport</keyword>
<keyword id="KW-0472">Membrane</keyword>
<keyword id="KW-0547">Nucleotide-binding</keyword>
<keyword id="KW-1185">Reference proteome</keyword>
<keyword id="KW-1278">Translocase</keyword>
<keyword id="KW-0813">Transport</keyword>
<evidence type="ECO:0000255" key="1">
    <source>
        <dbReference type="HAMAP-Rule" id="MF_01346"/>
    </source>
</evidence>
<proteinExistence type="inferred from homology"/>
<accession>Q2K3G8</accession>
<feature type="chain" id="PRO_0000256102" description="ATP synthase subunit alpha">
    <location>
        <begin position="1"/>
        <end position="509"/>
    </location>
</feature>
<feature type="binding site" evidence="1">
    <location>
        <begin position="169"/>
        <end position="176"/>
    </location>
    <ligand>
        <name>ATP</name>
        <dbReference type="ChEBI" id="CHEBI:30616"/>
    </ligand>
</feature>
<feature type="site" description="Required for activity" evidence="1">
    <location>
        <position position="370"/>
    </location>
</feature>
<reference key="1">
    <citation type="journal article" date="2006" name="Proc. Natl. Acad. Sci. U.S.A.">
        <title>The partitioned Rhizobium etli genome: genetic and metabolic redundancy in seven interacting replicons.</title>
        <authorList>
            <person name="Gonzalez V."/>
            <person name="Santamaria R.I."/>
            <person name="Bustos P."/>
            <person name="Hernandez-Gonzalez I."/>
            <person name="Medrano-Soto A."/>
            <person name="Moreno-Hagelsieb G."/>
            <person name="Janga S.C."/>
            <person name="Ramirez M.A."/>
            <person name="Jimenez-Jacinto V."/>
            <person name="Collado-Vides J."/>
            <person name="Davila G."/>
        </authorList>
    </citation>
    <scope>NUCLEOTIDE SEQUENCE [LARGE SCALE GENOMIC DNA]</scope>
    <source>
        <strain>ATCC 51251 / DSM 11541 / JCM 21823 / NBRC 15573 / CFN 42</strain>
    </source>
</reference>
<name>ATPA_RHIEC</name>
<gene>
    <name evidence="1" type="primary">atpA</name>
    <name type="ordered locus">RHE_CH03872</name>
</gene>
<protein>
    <recommendedName>
        <fullName evidence="1">ATP synthase subunit alpha</fullName>
        <ecNumber evidence="1">7.1.2.2</ecNumber>
    </recommendedName>
    <alternativeName>
        <fullName evidence="1">ATP synthase F1 sector subunit alpha</fullName>
    </alternativeName>
    <alternativeName>
        <fullName evidence="1">F-ATPase subunit alpha</fullName>
    </alternativeName>
</protein>
<dbReference type="EC" id="7.1.2.2" evidence="1"/>
<dbReference type="EMBL" id="CP000133">
    <property type="protein sequence ID" value="ABC92618.1"/>
    <property type="molecule type" value="Genomic_DNA"/>
</dbReference>
<dbReference type="RefSeq" id="WP_011427067.1">
    <property type="nucleotide sequence ID" value="NC_007761.1"/>
</dbReference>
<dbReference type="SMR" id="Q2K3G8"/>
<dbReference type="KEGG" id="ret:RHE_CH03872"/>
<dbReference type="eggNOG" id="COG0056">
    <property type="taxonomic scope" value="Bacteria"/>
</dbReference>
<dbReference type="HOGENOM" id="CLU_010091_2_1_5"/>
<dbReference type="OrthoDB" id="9803053at2"/>
<dbReference type="Proteomes" id="UP000001936">
    <property type="component" value="Chromosome"/>
</dbReference>
<dbReference type="GO" id="GO:0005886">
    <property type="term" value="C:plasma membrane"/>
    <property type="evidence" value="ECO:0007669"/>
    <property type="project" value="UniProtKB-SubCell"/>
</dbReference>
<dbReference type="GO" id="GO:0045259">
    <property type="term" value="C:proton-transporting ATP synthase complex"/>
    <property type="evidence" value="ECO:0007669"/>
    <property type="project" value="UniProtKB-KW"/>
</dbReference>
<dbReference type="GO" id="GO:0043531">
    <property type="term" value="F:ADP binding"/>
    <property type="evidence" value="ECO:0007669"/>
    <property type="project" value="TreeGrafter"/>
</dbReference>
<dbReference type="GO" id="GO:0005524">
    <property type="term" value="F:ATP binding"/>
    <property type="evidence" value="ECO:0007669"/>
    <property type="project" value="UniProtKB-UniRule"/>
</dbReference>
<dbReference type="GO" id="GO:0046933">
    <property type="term" value="F:proton-transporting ATP synthase activity, rotational mechanism"/>
    <property type="evidence" value="ECO:0007669"/>
    <property type="project" value="UniProtKB-UniRule"/>
</dbReference>
<dbReference type="CDD" id="cd18113">
    <property type="entry name" value="ATP-synt_F1_alpha_C"/>
    <property type="match status" value="1"/>
</dbReference>
<dbReference type="CDD" id="cd18116">
    <property type="entry name" value="ATP-synt_F1_alpha_N"/>
    <property type="match status" value="1"/>
</dbReference>
<dbReference type="CDD" id="cd01132">
    <property type="entry name" value="F1-ATPase_alpha_CD"/>
    <property type="match status" value="1"/>
</dbReference>
<dbReference type="FunFam" id="1.20.150.20:FF:000001">
    <property type="entry name" value="ATP synthase subunit alpha"/>
    <property type="match status" value="1"/>
</dbReference>
<dbReference type="FunFam" id="2.40.30.20:FF:000001">
    <property type="entry name" value="ATP synthase subunit alpha"/>
    <property type="match status" value="1"/>
</dbReference>
<dbReference type="FunFam" id="3.40.50.300:FF:002432">
    <property type="entry name" value="ATP synthase subunit alpha, mitochondrial"/>
    <property type="match status" value="1"/>
</dbReference>
<dbReference type="Gene3D" id="2.40.30.20">
    <property type="match status" value="1"/>
</dbReference>
<dbReference type="Gene3D" id="1.20.150.20">
    <property type="entry name" value="ATP synthase alpha/beta chain, C-terminal domain"/>
    <property type="match status" value="1"/>
</dbReference>
<dbReference type="Gene3D" id="3.40.50.300">
    <property type="entry name" value="P-loop containing nucleotide triphosphate hydrolases"/>
    <property type="match status" value="1"/>
</dbReference>
<dbReference type="HAMAP" id="MF_01346">
    <property type="entry name" value="ATP_synth_alpha_bact"/>
    <property type="match status" value="1"/>
</dbReference>
<dbReference type="InterPro" id="IPR023366">
    <property type="entry name" value="ATP_synth_asu-like_sf"/>
</dbReference>
<dbReference type="InterPro" id="IPR000793">
    <property type="entry name" value="ATP_synth_asu_C"/>
</dbReference>
<dbReference type="InterPro" id="IPR038376">
    <property type="entry name" value="ATP_synth_asu_C_sf"/>
</dbReference>
<dbReference type="InterPro" id="IPR033732">
    <property type="entry name" value="ATP_synth_F1_a_nt-bd_dom"/>
</dbReference>
<dbReference type="InterPro" id="IPR005294">
    <property type="entry name" value="ATP_synth_F1_asu"/>
</dbReference>
<dbReference type="InterPro" id="IPR020003">
    <property type="entry name" value="ATPase_a/bsu_AS"/>
</dbReference>
<dbReference type="InterPro" id="IPR004100">
    <property type="entry name" value="ATPase_F1/V1/A1_a/bsu_N"/>
</dbReference>
<dbReference type="InterPro" id="IPR036121">
    <property type="entry name" value="ATPase_F1/V1/A1_a/bsu_N_sf"/>
</dbReference>
<dbReference type="InterPro" id="IPR000194">
    <property type="entry name" value="ATPase_F1/V1/A1_a/bsu_nucl-bd"/>
</dbReference>
<dbReference type="InterPro" id="IPR027417">
    <property type="entry name" value="P-loop_NTPase"/>
</dbReference>
<dbReference type="NCBIfam" id="TIGR00962">
    <property type="entry name" value="atpA"/>
    <property type="match status" value="1"/>
</dbReference>
<dbReference type="NCBIfam" id="NF009884">
    <property type="entry name" value="PRK13343.1"/>
    <property type="match status" value="1"/>
</dbReference>
<dbReference type="PANTHER" id="PTHR48082">
    <property type="entry name" value="ATP SYNTHASE SUBUNIT ALPHA, MITOCHONDRIAL"/>
    <property type="match status" value="1"/>
</dbReference>
<dbReference type="PANTHER" id="PTHR48082:SF2">
    <property type="entry name" value="ATP SYNTHASE SUBUNIT ALPHA, MITOCHONDRIAL"/>
    <property type="match status" value="1"/>
</dbReference>
<dbReference type="Pfam" id="PF00006">
    <property type="entry name" value="ATP-synt_ab"/>
    <property type="match status" value="1"/>
</dbReference>
<dbReference type="Pfam" id="PF00306">
    <property type="entry name" value="ATP-synt_ab_C"/>
    <property type="match status" value="1"/>
</dbReference>
<dbReference type="Pfam" id="PF02874">
    <property type="entry name" value="ATP-synt_ab_N"/>
    <property type="match status" value="1"/>
</dbReference>
<dbReference type="PIRSF" id="PIRSF039088">
    <property type="entry name" value="F_ATPase_subunit_alpha"/>
    <property type="match status" value="1"/>
</dbReference>
<dbReference type="SUPFAM" id="SSF47917">
    <property type="entry name" value="C-terminal domain of alpha and beta subunits of F1 ATP synthase"/>
    <property type="match status" value="1"/>
</dbReference>
<dbReference type="SUPFAM" id="SSF50615">
    <property type="entry name" value="N-terminal domain of alpha and beta subunits of F1 ATP synthase"/>
    <property type="match status" value="1"/>
</dbReference>
<dbReference type="SUPFAM" id="SSF52540">
    <property type="entry name" value="P-loop containing nucleoside triphosphate hydrolases"/>
    <property type="match status" value="1"/>
</dbReference>
<dbReference type="PROSITE" id="PS00152">
    <property type="entry name" value="ATPASE_ALPHA_BETA"/>
    <property type="match status" value="1"/>
</dbReference>
<sequence>MDIRAAEISAILKDQIKNFGKEAEVSEVGQVLSVGDGIARVYGLDNVQAGEMVEFPGGIRGMALNLESDNVGVVIFGSDRDIKEGDTVKRTGAIVDVPVGPELLGRVVDALGNPIDGKGPINATRRSRVDVKAPGIIPRKSVHEPMSTGLKAIDALIPVGRGQRELVIGDRQTGKTAILLDAFLNQKAIHDNGPEGEKLYCVYVAVGQKRSTVAQFVKVLEERGALKYSIIIAATASDPAPMQFLAPFAGCAMGEYFRDNGMHALIGYDDLSKQAVSYRQMSLLLRRPPGREAYPGDVFYLHSRLLERAAKMNDDKGAGSLTALPVIETQGNDVSAFIPTNVISITDGQIFLETDLFYQGIRPAVNVGLSVSRVGSSAQIKAMKQVAGSIKGELAQYREMAAFAQFGSDLDAATQRLLNRGARLTELLKQPQFSPLKTEEQVAVIFAGVNGYLDKLPVAQVGKFEQGLLSYLRSEGSAILDAIRTEKAISDDTKGKLTAALDSFAKSFQ</sequence>